<evidence type="ECO:0000250" key="1"/>
<evidence type="ECO:0000250" key="2">
    <source>
        <dbReference type="UniProtKB" id="Q5TAQ9"/>
    </source>
</evidence>
<evidence type="ECO:0000256" key="3">
    <source>
        <dbReference type="SAM" id="MobiDB-lite"/>
    </source>
</evidence>
<evidence type="ECO:0000305" key="4"/>
<evidence type="ECO:0007744" key="5">
    <source>
    </source>
</evidence>
<dbReference type="EMBL" id="BC085957">
    <property type="protein sequence ID" value="AAH85957.1"/>
    <property type="molecule type" value="mRNA"/>
</dbReference>
<dbReference type="RefSeq" id="NP_001014253.1">
    <property type="nucleotide sequence ID" value="NM_001014231.2"/>
</dbReference>
<dbReference type="RefSeq" id="NP_001416841.1">
    <property type="nucleotide sequence ID" value="NM_001429912.1"/>
</dbReference>
<dbReference type="RefSeq" id="NP_001416842.1">
    <property type="nucleotide sequence ID" value="NM_001429913.1"/>
</dbReference>
<dbReference type="RefSeq" id="XP_006250359.1">
    <property type="nucleotide sequence ID" value="XM_006250297.3"/>
</dbReference>
<dbReference type="RefSeq" id="XP_006250360.1">
    <property type="nucleotide sequence ID" value="XM_006250298.2"/>
</dbReference>
<dbReference type="SMR" id="Q5U2M6"/>
<dbReference type="FunCoup" id="Q5U2M6">
    <property type="interactions" value="3893"/>
</dbReference>
<dbReference type="IntAct" id="Q5U2M6">
    <property type="interactions" value="2"/>
</dbReference>
<dbReference type="STRING" id="10116.ENSRNOP00000008944"/>
<dbReference type="iPTMnet" id="Q5U2M6"/>
<dbReference type="PhosphoSitePlus" id="Q5U2M6"/>
<dbReference type="PaxDb" id="10116-ENSRNOP00000008944"/>
<dbReference type="Ensembl" id="ENSRNOT00000101398.1">
    <property type="protein sequence ID" value="ENSRNOP00000095537.1"/>
    <property type="gene ID" value="ENSRNOG00000006785.8"/>
</dbReference>
<dbReference type="GeneID" id="364050"/>
<dbReference type="KEGG" id="rno:364050"/>
<dbReference type="UCSC" id="RGD:1308513">
    <property type="organism name" value="rat"/>
</dbReference>
<dbReference type="AGR" id="RGD:1308513"/>
<dbReference type="CTD" id="50717"/>
<dbReference type="RGD" id="1308513">
    <property type="gene designation" value="Dcaf8"/>
</dbReference>
<dbReference type="eggNOG" id="KOG1334">
    <property type="taxonomic scope" value="Eukaryota"/>
</dbReference>
<dbReference type="GeneTree" id="ENSGT00950000182900"/>
<dbReference type="HOGENOM" id="CLU_012381_4_1_1"/>
<dbReference type="InParanoid" id="Q5U2M6"/>
<dbReference type="OMA" id="MRMMNGD"/>
<dbReference type="OrthoDB" id="44105at9989"/>
<dbReference type="PhylomeDB" id="Q5U2M6"/>
<dbReference type="TreeFam" id="TF326071"/>
<dbReference type="Reactome" id="R-RNO-8951664">
    <property type="pathway name" value="Neddylation"/>
</dbReference>
<dbReference type="UniPathway" id="UPA00143"/>
<dbReference type="PRO" id="PR:Q5U2M6"/>
<dbReference type="Proteomes" id="UP000002494">
    <property type="component" value="Chromosome 13"/>
</dbReference>
<dbReference type="Bgee" id="ENSRNOG00000006785">
    <property type="expression patterns" value="Expressed in skeletal muscle tissue and 19 other cell types or tissues"/>
</dbReference>
<dbReference type="ExpressionAtlas" id="Q5U2M6">
    <property type="expression patterns" value="baseline and differential"/>
</dbReference>
<dbReference type="GO" id="GO:0080008">
    <property type="term" value="C:Cul4-RING E3 ubiquitin ligase complex"/>
    <property type="evidence" value="ECO:0000250"/>
    <property type="project" value="UniProtKB"/>
</dbReference>
<dbReference type="GO" id="GO:0005737">
    <property type="term" value="C:cytoplasm"/>
    <property type="evidence" value="ECO:0000250"/>
    <property type="project" value="UniProtKB"/>
</dbReference>
<dbReference type="GO" id="GO:0005829">
    <property type="term" value="C:cytosol"/>
    <property type="evidence" value="ECO:0007669"/>
    <property type="project" value="Ensembl"/>
</dbReference>
<dbReference type="GO" id="GO:0005739">
    <property type="term" value="C:mitochondrion"/>
    <property type="evidence" value="ECO:0007669"/>
    <property type="project" value="Ensembl"/>
</dbReference>
<dbReference type="GO" id="GO:0005654">
    <property type="term" value="C:nucleoplasm"/>
    <property type="evidence" value="ECO:0007669"/>
    <property type="project" value="Ensembl"/>
</dbReference>
<dbReference type="GO" id="GO:0005634">
    <property type="term" value="C:nucleus"/>
    <property type="evidence" value="ECO:0000250"/>
    <property type="project" value="UniProtKB"/>
</dbReference>
<dbReference type="GO" id="GO:0014904">
    <property type="term" value="P:myotube cell development"/>
    <property type="evidence" value="ECO:0000266"/>
    <property type="project" value="RGD"/>
</dbReference>
<dbReference type="GO" id="GO:0016567">
    <property type="term" value="P:protein ubiquitination"/>
    <property type="evidence" value="ECO:0007669"/>
    <property type="project" value="UniProtKB-UniPathway"/>
</dbReference>
<dbReference type="FunFam" id="2.130.10.10:FF:000144">
    <property type="entry name" value="DDB1- and CUL4-associated factor 8"/>
    <property type="match status" value="1"/>
</dbReference>
<dbReference type="Gene3D" id="2.130.10.10">
    <property type="entry name" value="YVTN repeat-like/Quinoprotein amine dehydrogenase"/>
    <property type="match status" value="1"/>
</dbReference>
<dbReference type="InterPro" id="IPR045151">
    <property type="entry name" value="DCAF8"/>
</dbReference>
<dbReference type="InterPro" id="IPR015943">
    <property type="entry name" value="WD40/YVTN_repeat-like_dom_sf"/>
</dbReference>
<dbReference type="InterPro" id="IPR036322">
    <property type="entry name" value="WD40_repeat_dom_sf"/>
</dbReference>
<dbReference type="InterPro" id="IPR001680">
    <property type="entry name" value="WD40_rpt"/>
</dbReference>
<dbReference type="PANTHER" id="PTHR15574:SF57">
    <property type="entry name" value="DDB1- AND CUL4-ASSOCIATED FACTOR 8"/>
    <property type="match status" value="1"/>
</dbReference>
<dbReference type="PANTHER" id="PTHR15574">
    <property type="entry name" value="WD REPEAT DOMAIN-CONTAINING FAMILY"/>
    <property type="match status" value="1"/>
</dbReference>
<dbReference type="Pfam" id="PF00400">
    <property type="entry name" value="WD40"/>
    <property type="match status" value="3"/>
</dbReference>
<dbReference type="SMART" id="SM00320">
    <property type="entry name" value="WD40"/>
    <property type="match status" value="7"/>
</dbReference>
<dbReference type="SUPFAM" id="SSF50978">
    <property type="entry name" value="WD40 repeat-like"/>
    <property type="match status" value="1"/>
</dbReference>
<dbReference type="PROSITE" id="PS50082">
    <property type="entry name" value="WD_REPEATS_2"/>
    <property type="match status" value="1"/>
</dbReference>
<dbReference type="PROSITE" id="PS50294">
    <property type="entry name" value="WD_REPEATS_REGION"/>
    <property type="match status" value="1"/>
</dbReference>
<reference key="1">
    <citation type="journal article" date="2004" name="Genome Res.">
        <title>The status, quality, and expansion of the NIH full-length cDNA project: the Mammalian Gene Collection (MGC).</title>
        <authorList>
            <consortium name="The MGC Project Team"/>
        </authorList>
    </citation>
    <scope>NUCLEOTIDE SEQUENCE [LARGE SCALE MRNA]</scope>
    <source>
        <tissue>Testis</tissue>
    </source>
</reference>
<reference key="2">
    <citation type="journal article" date="2012" name="Nat. Commun.">
        <title>Quantitative maps of protein phosphorylation sites across 14 different rat organs and tissues.</title>
        <authorList>
            <person name="Lundby A."/>
            <person name="Secher A."/>
            <person name="Lage K."/>
            <person name="Nordsborg N.B."/>
            <person name="Dmytriyev A."/>
            <person name="Lundby C."/>
            <person name="Olsen J.V."/>
        </authorList>
    </citation>
    <scope>PHOSPHORYLATION [LARGE SCALE ANALYSIS] AT SER-21; SER-22; SER-99; SER-123 AND SER-124</scope>
    <scope>IDENTIFICATION BY MASS SPECTROMETRY [LARGE SCALE ANALYSIS]</scope>
</reference>
<organism>
    <name type="scientific">Rattus norvegicus</name>
    <name type="common">Rat</name>
    <dbReference type="NCBI Taxonomy" id="10116"/>
    <lineage>
        <taxon>Eukaryota</taxon>
        <taxon>Metazoa</taxon>
        <taxon>Chordata</taxon>
        <taxon>Craniata</taxon>
        <taxon>Vertebrata</taxon>
        <taxon>Euteleostomi</taxon>
        <taxon>Mammalia</taxon>
        <taxon>Eutheria</taxon>
        <taxon>Euarchontoglires</taxon>
        <taxon>Glires</taxon>
        <taxon>Rodentia</taxon>
        <taxon>Myomorpha</taxon>
        <taxon>Muroidea</taxon>
        <taxon>Muridae</taxon>
        <taxon>Murinae</taxon>
        <taxon>Rattus</taxon>
    </lineage>
</organism>
<accession>Q5U2M6</accession>
<gene>
    <name type="primary">Dcaf8</name>
    <name type="synonym">Wdr42a</name>
</gene>
<protein>
    <recommendedName>
        <fullName>DDB1- and CUL4-associated factor 8</fullName>
    </recommendedName>
    <alternativeName>
        <fullName>WD repeat-containing protein 42A</fullName>
    </alternativeName>
</protein>
<sequence length="591" mass="66156">MSSKRPSTDGRRDLANGSLSSSPEEMSGAEEGRETSSGIEVEASDLSLSLTGDDGGPNRTSTESRGTDTESSGEEKDSDSMEDTGHYSINDENRVHGHSDEEEEEEQPRHRVQRKRASRDQDSSDDERALEDWVSSETTALPRPRWQALPALRERELGSSARFVYEACGARVFVQRFRLQHGLEGHTGCVNTLHFNQRGTWLASGSDDLKVVVWDWVRRQPVLDFESGHKSNVFQAKFLPNSGDSTLAMCARDGQVRVAELSATQCCKNTKRVAQHKGASHKLALEPDSPCTFLSAGEDAVVFTIDLRQDRPASKLVVTKEKEKKVGLYTIYVNPANTHQFAVGGRDQFVRIYDQRKIDENENNGVLKKFCPHHLVNSESKANITCLVYSHDGTELLASYNDEDIYLFNSSHSDGAQYIKRYKGHRNNATVKGVNFYGPKSEFVVSGSDCGHIFLWEKSSCQIIQFMEGDKGGVVNCLEPHPHLPVLATSGLDHDVKIWAPTAEASTELTGLKDVIKKNKRERDEDSLHHTDLFDSHMLWFLMHHLRQRRHHRRWREPGVGATDADSDESPSSSDTSDEEEGPDRVQCMPS</sequence>
<comment type="function">
    <text evidence="1">May function as a substrate receptor for CUL4-DDB1 E3 ubiquitin-protein ligase complex.</text>
</comment>
<comment type="pathway">
    <text>Protein modification; protein ubiquitination.</text>
</comment>
<comment type="subunit">
    <text evidence="1 2">Interacts with DDB1, CUL4A and CUL4B. Interacts with KPNA1, KPNB1 and XPO1.</text>
</comment>
<comment type="subcellular location">
    <subcellularLocation>
        <location evidence="2">Nucleus</location>
    </subcellularLocation>
    <subcellularLocation>
        <location evidence="2">Cytoplasm</location>
    </subcellularLocation>
    <text evidence="2">It shuttles between the nucleus and the cytoplasm. Nuclear import is mediated by KPNA1 and KPNB1 under the regulation of nuclear GTPase RAN. Nuclear export to the cytoplasm is XPO1 dependent.</text>
</comment>
<comment type="similarity">
    <text evidence="4">Belongs to the WD repeat DCAF8 family.</text>
</comment>
<proteinExistence type="evidence at protein level"/>
<feature type="chain" id="PRO_0000296960" description="DDB1- and CUL4-associated factor 8">
    <location>
        <begin position="1"/>
        <end position="591"/>
    </location>
</feature>
<feature type="repeat" description="WD 1">
    <location>
        <begin position="185"/>
        <end position="224"/>
    </location>
</feature>
<feature type="repeat" description="WD 2">
    <location>
        <begin position="228"/>
        <end position="269"/>
    </location>
</feature>
<feature type="repeat" description="WD 3">
    <location>
        <begin position="275"/>
        <end position="315"/>
    </location>
</feature>
<feature type="repeat" description="WD 4">
    <location>
        <begin position="323"/>
        <end position="363"/>
    </location>
</feature>
<feature type="repeat" description="WD 5">
    <location>
        <begin position="379"/>
        <end position="418"/>
    </location>
</feature>
<feature type="repeat" description="WD 6">
    <location>
        <begin position="426"/>
        <end position="466"/>
    </location>
</feature>
<feature type="repeat" description="WD 7">
    <location>
        <begin position="470"/>
        <end position="509"/>
    </location>
</feature>
<feature type="region of interest" description="Disordered" evidence="3">
    <location>
        <begin position="1"/>
        <end position="140"/>
    </location>
</feature>
<feature type="region of interest" description="Disordered" evidence="3">
    <location>
        <begin position="552"/>
        <end position="591"/>
    </location>
</feature>
<feature type="short sequence motif" description="Nuclear export signal" evidence="2">
    <location>
        <begin position="39"/>
        <end position="50"/>
    </location>
</feature>
<feature type="compositionally biased region" description="Basic and acidic residues" evidence="3">
    <location>
        <begin position="1"/>
        <end position="14"/>
    </location>
</feature>
<feature type="compositionally biased region" description="Basic and acidic residues" evidence="3">
    <location>
        <begin position="65"/>
        <end position="99"/>
    </location>
</feature>
<feature type="compositionally biased region" description="Basic and acidic residues" evidence="3">
    <location>
        <begin position="118"/>
        <end position="131"/>
    </location>
</feature>
<feature type="modified residue" description="Phosphoserine" evidence="5">
    <location>
        <position position="21"/>
    </location>
</feature>
<feature type="modified residue" description="Phosphoserine" evidence="5">
    <location>
        <position position="22"/>
    </location>
</feature>
<feature type="modified residue" description="Phosphoserine" evidence="5">
    <location>
        <position position="99"/>
    </location>
</feature>
<feature type="modified residue" description="Phosphoserine" evidence="5">
    <location>
        <position position="123"/>
    </location>
</feature>
<feature type="modified residue" description="Phosphoserine" evidence="5">
    <location>
        <position position="124"/>
    </location>
</feature>
<feature type="modified residue" description="Omega-N-methylarginine; by PRMT1" evidence="2">
    <location>
        <position position="198"/>
    </location>
</feature>
<name>DCAF8_RAT</name>
<keyword id="KW-0963">Cytoplasm</keyword>
<keyword id="KW-0488">Methylation</keyword>
<keyword id="KW-0539">Nucleus</keyword>
<keyword id="KW-0597">Phosphoprotein</keyword>
<keyword id="KW-1185">Reference proteome</keyword>
<keyword id="KW-0677">Repeat</keyword>
<keyword id="KW-0833">Ubl conjugation pathway</keyword>
<keyword id="KW-0853">WD repeat</keyword>